<organismHost>
    <name type="scientific">Cynomys gunnisoni</name>
    <name type="common">Gunnison's prairie dog</name>
    <name type="synonym">Spermophilus gunnisoni</name>
    <dbReference type="NCBI Taxonomy" id="45479"/>
</organismHost>
<organismHost>
    <name type="scientific">Cynomys leucurus</name>
    <name type="common">White-tailed prairie dog</name>
    <dbReference type="NCBI Taxonomy" id="99825"/>
</organismHost>
<organismHost>
    <name type="scientific">Cynomys ludovicianus</name>
    <name type="common">Black-tailed prairie dog</name>
    <dbReference type="NCBI Taxonomy" id="45480"/>
</organismHost>
<organismHost>
    <name type="scientific">Cynomys mexicanus</name>
    <name type="common">Mexican prairie dog</name>
    <dbReference type="NCBI Taxonomy" id="99826"/>
</organismHost>
<organismHost>
    <name type="scientific">Cynomys parvidens</name>
    <name type="common">Utah prairie dog</name>
    <dbReference type="NCBI Taxonomy" id="99827"/>
</organismHost>
<organismHost>
    <name type="scientific">Gliridae</name>
    <name type="common">dormice</name>
    <dbReference type="NCBI Taxonomy" id="30650"/>
</organismHost>
<organismHost>
    <name type="scientific">Heliosciurus ruwenzorii</name>
    <name type="common">Ruwenzori sun squirrel</name>
    <dbReference type="NCBI Taxonomy" id="226685"/>
</organismHost>
<organismHost>
    <name type="scientific">Homo sapiens</name>
    <name type="common">Human</name>
    <dbReference type="NCBI Taxonomy" id="9606"/>
</organismHost>
<organismHost>
    <name type="scientific">Mus musculus</name>
    <name type="common">Mouse</name>
    <dbReference type="NCBI Taxonomy" id="10090"/>
</organismHost>
<organism>
    <name type="scientific">Monkeypox virus (strain Zaire-96-I-16)</name>
    <name type="common">MPX</name>
    <dbReference type="NCBI Taxonomy" id="619591"/>
    <lineage>
        <taxon>Viruses</taxon>
        <taxon>Varidnaviria</taxon>
        <taxon>Bamfordvirae</taxon>
        <taxon>Nucleocytoviricota</taxon>
        <taxon>Pokkesviricetes</taxon>
        <taxon>Chitovirales</taxon>
        <taxon>Poxviridae</taxon>
        <taxon>Chordopoxvirinae</taxon>
        <taxon>Orthopoxvirus</taxon>
        <taxon>Monkeypox virus</taxon>
    </lineage>
</organism>
<accession>Q8V4S4</accession>
<feature type="chain" id="PRO_0000446974" description="Poxin-Schlafen">
    <location>
        <begin position="1"/>
        <end position="503"/>
    </location>
</feature>
<feature type="region of interest" description="Poxin-like" evidence="1">
    <location>
        <begin position="1"/>
        <end position="236"/>
    </location>
</feature>
<feature type="region of interest" description="Schlafen-like" evidence="1">
    <location>
        <begin position="237"/>
        <end position="503"/>
    </location>
</feature>
<feature type="active site" description="Proton donor" evidence="1">
    <location>
        <position position="15"/>
    </location>
</feature>
<feature type="active site" description="Shared with catalytic histidine of dimeric partner" evidence="1">
    <location>
        <position position="136"/>
    </location>
</feature>
<feature type="active site" description="Proton acceptor; shared with catalytic histidine of dimeric partner" evidence="1">
    <location>
        <position position="140"/>
    </location>
</feature>
<feature type="site" description="Substrate binding" evidence="1">
    <location>
        <position position="58"/>
    </location>
</feature>
<feature type="site" description="Substrate binding" evidence="1">
    <location>
        <position position="103"/>
    </location>
</feature>
<feature type="site" description="Substrate binding" evidence="1">
    <location>
        <position position="147"/>
    </location>
</feature>
<feature type="site" description="Substrate binding" evidence="1">
    <location>
        <position position="167"/>
    </location>
</feature>
<feature type="site" description="Substrate binding" evidence="1">
    <location>
        <position position="180"/>
    </location>
</feature>
<feature type="site" description="Substrate binding" evidence="1">
    <location>
        <position position="182"/>
    </location>
</feature>
<feature type="site" description="Substrate binding" evidence="1">
    <location>
        <position position="184"/>
    </location>
</feature>
<sequence length="503" mass="57454">MFYAHAFGGYDENLHAFPRISSTVANDVRKYSVVSVYNKKYNIVKNKYMWCNSQVNKRYIGALLPMFECNEYLQIGDPIHDLEGNQISIVTYRHKNYYALSGIGYESLDLCLEGVGIHHHVLETGNAVYGKVQHEYSTIKEKAKEMNALKPGPIIDYHVWIGDCVCQVTTVDVHGKEIMRMRFKRGAVLPIPNLVKVKVGEENDTINLSTSISALLNSGGGTIEVTSKEERVDYVLMKRLESIHHLWSVVYDHLNVVNGEERCYIHMHSSHQSPMLSTVKTNLYMKTMGACLQMDSMEALEYLSELKESGGRSPRPELQKFEYPDGVKDTESIERLAEEFFNRSELQAGESVKFGNSINVKHTSVSAKQLRTRIRQQLPSILSSFANTKGGYLFIGVDNNTHKVIGFTVGHDYLKLVERDIEKYIQKLPVVHFCKKKEDIKYACRFIKVYKPGDETTSTYVCAIKVERCCCAVFADWPESWYMDTSGSMKKYSPDEWVSHIKF</sequence>
<proteinExistence type="evidence at protein level"/>
<name>POXIN_MONPZ</name>
<gene>
    <name type="primary">OPG188</name>
    <name type="synonym">B4R</name>
</gene>
<evidence type="ECO:0000255" key="1">
    <source>
        <dbReference type="HAMAP-Rule" id="MF_04143"/>
    </source>
</evidence>
<evidence type="ECO:0000269" key="2">
    <source>
    </source>
</evidence>
<evidence type="ECO:0000303" key="3">
    <source>
    </source>
</evidence>
<evidence type="ECO:0000305" key="4"/>
<evidence type="ECO:0000305" key="5">
    <source>
    </source>
</evidence>
<protein>
    <recommendedName>
        <fullName evidence="1 3">Poxin-Schlafen</fullName>
        <ecNumber evidence="1 2">3.1.-.-</ecNumber>
    </recommendedName>
</protein>
<comment type="function">
    <text evidence="1 2">Nuclease that is responsible for viral evasion of host cGAS-STING innate immunity (PubMed:30728498). Cleaves 2',3'-cGAMP which is produced by host cGAS following recognition of intracellular foreign DNA and blocks the subsequent 2',3'-cGAMP-mediated activation of TMEM173/STING which normally spreads to adjacent cells and activates the interferon and NF-kappa-B immune responses (PubMed:30728498).</text>
</comment>
<comment type="catalytic activity">
    <reaction evidence="1 2">
        <text>2',3'-cGAMP + H2O = Gp(2'-5')Ap(3') + H(+)</text>
        <dbReference type="Rhea" id="RHEA:59472"/>
        <dbReference type="ChEBI" id="CHEBI:15377"/>
        <dbReference type="ChEBI" id="CHEBI:15378"/>
        <dbReference type="ChEBI" id="CHEBI:143093"/>
        <dbReference type="ChEBI" id="CHEBI:143098"/>
    </reaction>
    <physiologicalReaction direction="left-to-right" evidence="1 5">
        <dbReference type="Rhea" id="RHEA:59473"/>
    </physiologicalReaction>
</comment>
<comment type="subunit">
    <text evidence="1">Homodimer.</text>
</comment>
<comment type="induction">
    <text>Expressed in the early phase of the viral replicative cycle.</text>
</comment>
<comment type="domain">
    <text evidence="1">The substrate binding site is formed by the N-terminus of a monomer and the C-terminus of the opposite monomer.</text>
</comment>
<comment type="miscellaneous">
    <text evidence="4">In some poxviruses, the poxin is expressed as a poxin-schlafen fusion protein.</text>
</comment>
<comment type="similarity">
    <text evidence="1">In the N-terminal section; belongs to the poxin family.</text>
</comment>
<comment type="similarity">
    <text evidence="1">In the C-terminal section; belongs to the Schlafen protein family. Subgroup poxviridae B3 subfamily.</text>
</comment>
<keyword id="KW-0244">Early protein</keyword>
<keyword id="KW-0378">Hydrolase</keyword>
<keyword id="KW-0540">Nuclease</keyword>
<reference key="1">
    <citation type="journal article" date="2001" name="FEBS Lett.">
        <title>Human monkeypox and smallpox viruses: genomic comparison.</title>
        <authorList>
            <person name="Shchelkunov S.N."/>
            <person name="Totmenin A.V."/>
            <person name="Babkin I.V."/>
            <person name="Safronov P.F."/>
            <person name="Ryazankina O.I."/>
            <person name="Petrov N.A."/>
            <person name="Gutorov V.V."/>
            <person name="Uvarova E.A."/>
            <person name="Mikheev M.V."/>
            <person name="Sisler J.R."/>
            <person name="Esposito J.J."/>
            <person name="Jahrling P.B."/>
            <person name="Moss B."/>
            <person name="Sandakhchiev L.S."/>
        </authorList>
    </citation>
    <scope>NUCLEOTIDE SEQUENCE [LARGE SCALE GENOMIC DNA]</scope>
</reference>
<reference key="2">
    <citation type="journal article" date="2019" name="Nature">
        <title>Viral and metazoan poxins are cGAMP-specific nucleases that restrict cGAS-STING signalling.</title>
        <authorList>
            <person name="Eaglesham J.B."/>
            <person name="Pan Y."/>
            <person name="Kupper T.S."/>
            <person name="Kranzusch P.J."/>
        </authorList>
    </citation>
    <scope>FUNCTION</scope>
    <scope>CATALYTIC ACTIVITY</scope>
</reference>
<dbReference type="EC" id="3.1.-.-" evidence="1 2"/>
<dbReference type="EMBL" id="AF380138">
    <property type="protein sequence ID" value="AAL40623.1"/>
    <property type="molecule type" value="Genomic_DNA"/>
</dbReference>
<dbReference type="RefSeq" id="NP_536592.1">
    <property type="nucleotide sequence ID" value="NC_003310.1"/>
</dbReference>
<dbReference type="SMR" id="Q8V4S4"/>
<dbReference type="GeneID" id="928917"/>
<dbReference type="KEGG" id="vg:928917"/>
<dbReference type="Proteomes" id="UP000101269">
    <property type="component" value="Genome"/>
</dbReference>
<dbReference type="GO" id="GO:0061507">
    <property type="term" value="F:2',3'-cyclic GMP-AMP binding"/>
    <property type="evidence" value="ECO:0007669"/>
    <property type="project" value="UniProtKB-UniRule"/>
</dbReference>
<dbReference type="GO" id="GO:0004518">
    <property type="term" value="F:nuclease activity"/>
    <property type="evidence" value="ECO:0007669"/>
    <property type="project" value="UniProtKB-UniRule"/>
</dbReference>
<dbReference type="GO" id="GO:0052170">
    <property type="term" value="P:symbiont-mediated suppression of host innate immune response"/>
    <property type="evidence" value="ECO:0007669"/>
    <property type="project" value="UniProtKB-UniRule"/>
</dbReference>
<dbReference type="Gene3D" id="3.30.950.30">
    <property type="entry name" value="Schlafen, AAA domain"/>
    <property type="match status" value="1"/>
</dbReference>
<dbReference type="HAMAP" id="MF_04143">
    <property type="entry name" value="Poxins"/>
    <property type="match status" value="1"/>
</dbReference>
<dbReference type="InterPro" id="IPR031450">
    <property type="entry name" value="Poxin-SLFN/SLFN_N"/>
</dbReference>
<dbReference type="InterPro" id="IPR006853">
    <property type="entry name" value="Poxin_vir"/>
</dbReference>
<dbReference type="InterPro" id="IPR029684">
    <property type="entry name" value="Schlafen"/>
</dbReference>
<dbReference type="InterPro" id="IPR007421">
    <property type="entry name" value="Schlafen_AlbA_2_dom"/>
</dbReference>
<dbReference type="InterPro" id="IPR038461">
    <property type="entry name" value="Schlafen_AlbA_2_dom_sf"/>
</dbReference>
<dbReference type="PANTHER" id="PTHR12155:SF2">
    <property type="entry name" value="RIBONUCLEASE SLFN12"/>
    <property type="match status" value="1"/>
</dbReference>
<dbReference type="PANTHER" id="PTHR12155">
    <property type="entry name" value="SCHLAFEN"/>
    <property type="match status" value="1"/>
</dbReference>
<dbReference type="Pfam" id="PF17057">
    <property type="entry name" value="B3R"/>
    <property type="match status" value="1"/>
</dbReference>
<dbReference type="Pfam" id="PF04326">
    <property type="entry name" value="SLFN_AlbA_2"/>
    <property type="match status" value="1"/>
</dbReference>